<feature type="signal peptide" evidence="3">
    <location>
        <begin position="1"/>
        <end position="29"/>
    </location>
</feature>
<feature type="chain" id="PRO_0000017006" description="Beta-lactamase">
    <location>
        <begin position="30"/>
        <end position="302"/>
    </location>
</feature>
<feature type="region of interest" description="Disordered" evidence="5">
    <location>
        <begin position="1"/>
        <end position="43"/>
    </location>
</feature>
<feature type="compositionally biased region" description="Basic residues" evidence="5">
    <location>
        <begin position="1"/>
        <end position="11"/>
    </location>
</feature>
<feature type="compositionally biased region" description="Low complexity" evidence="5">
    <location>
        <begin position="26"/>
        <end position="36"/>
    </location>
</feature>
<feature type="active site" description="Acyl-ester intermediate" evidence="2">
    <location>
        <position position="85"/>
    </location>
</feature>
<feature type="active site" description="Proton acceptor" evidence="2">
    <location>
        <position position="179"/>
    </location>
</feature>
<feature type="binding site" evidence="2">
    <location>
        <position position="143"/>
    </location>
    <ligand>
        <name>substrate</name>
    </ligand>
</feature>
<feature type="binding site" evidence="1">
    <location>
        <begin position="247"/>
        <end position="249"/>
    </location>
    <ligand>
        <name>substrate</name>
    </ligand>
</feature>
<feature type="site" description="Increases nucleophilicity of active site Ser" evidence="2">
    <location>
        <position position="88"/>
    </location>
</feature>
<proteinExistence type="inferred from homology"/>
<protein>
    <recommendedName>
        <fullName>Beta-lactamase</fullName>
        <ecNumber>3.5.2.6</ecNumber>
    </recommendedName>
    <alternativeName>
        <fullName>Penicillinase</fullName>
    </alternativeName>
</protein>
<comment type="function">
    <text>Active on penicillins but not on cephalosporins.</text>
</comment>
<comment type="catalytic activity">
    <reaction evidence="4">
        <text>a beta-lactam + H2O = a substituted beta-amino acid</text>
        <dbReference type="Rhea" id="RHEA:20401"/>
        <dbReference type="ChEBI" id="CHEBI:15377"/>
        <dbReference type="ChEBI" id="CHEBI:35627"/>
        <dbReference type="ChEBI" id="CHEBI:140347"/>
        <dbReference type="EC" id="3.5.2.6"/>
    </reaction>
</comment>
<comment type="subcellular location">
    <subcellularLocation>
        <location>Secreted</location>
    </subcellularLocation>
</comment>
<comment type="miscellaneous">
    <text evidence="7">The class A beta-lactamase family has a specific amino-acid numbering system, sometimes called Ambler or ABL numbering and often misspelt as Amber. A multiple sequence alignment was used to derive a consensus sequence and then the consensus was numbered taking into account insertions and deletions. This allows use of identical numbers, e.g. for active site residues, despite differences in protein length. UniProt always uses natural numbering of residues, hence there appear to be differences in numbering between this entry and some papers.</text>
</comment>
<comment type="similarity">
    <text evidence="6">Belongs to the class-A beta-lactamase family.</text>
</comment>
<sequence length="302" mass="32084">MADRRRVHAWARARPAAPEPAPPTPSAAAPSVAPGPAATPPDPAVEQEFTRLQTQYDARLGLYAVDTGSGESVAFRADERFAFASTFKALAAAAVLDSTTPQQLDQVVRYSKDELLENSPITKDHVATGMTLRELCDAAVRFSDNTAGNLLLKHVGGPQGLDAALTAVGDEVTSADRWEPELNSAVPGDVRDTSTPRALAHDLRQFVLGDALAEDDRALLTDWLRRNTTGGTVIRAGVPADWVVGDKTGSGYYGGRNDIAVLWPPNRAPIVMAVMTSREEPRAKRADALLADAARVAVTALG</sequence>
<accession>Q06316</accession>
<reference key="1">
    <citation type="journal article" date="1993" name="EMBO J.">
        <title>Genes for a beta-lactamase, a penicillin-binding protein and a transmembrane protein are clustered with the cephamycin biosynthetic genes in Nocardia lactamdurans.</title>
        <authorList>
            <person name="Coque J.J.R."/>
            <person name="Liras P."/>
            <person name="Martin J.F."/>
        </authorList>
    </citation>
    <scope>NUCLEOTIDE SEQUENCE [GENOMIC DNA]</scope>
    <source>
        <strain>LC411</strain>
    </source>
</reference>
<reference key="2">
    <citation type="journal article" date="1991" name="Biochem. J.">
        <title>A standard numbering scheme for the class A beta-lactamases.</title>
        <authorList>
            <person name="Ambler R.P."/>
            <person name="Coulson A.F."/>
            <person name="Frere J.M."/>
            <person name="Ghuysen J.M."/>
            <person name="Joris B."/>
            <person name="Forsman M."/>
            <person name="Levesque R.C."/>
            <person name="Tiraby G."/>
            <person name="Waley S.G."/>
        </authorList>
    </citation>
    <scope>AMINO ACID NUMBERING SCHEME</scope>
</reference>
<keyword id="KW-0046">Antibiotic resistance</keyword>
<keyword id="KW-0378">Hydrolase</keyword>
<keyword id="KW-0964">Secreted</keyword>
<keyword id="KW-0732">Signal</keyword>
<organism>
    <name type="scientific">Amycolatopsis lactamdurans</name>
    <name type="common">Nocardia lactamdurans</name>
    <dbReference type="NCBI Taxonomy" id="1913"/>
    <lineage>
        <taxon>Bacteria</taxon>
        <taxon>Bacillati</taxon>
        <taxon>Actinomycetota</taxon>
        <taxon>Actinomycetes</taxon>
        <taxon>Pseudonocardiales</taxon>
        <taxon>Pseudonocardiaceae</taxon>
        <taxon>Amycolatopsis</taxon>
    </lineage>
</organism>
<evidence type="ECO:0000250" key="1"/>
<evidence type="ECO:0000250" key="2">
    <source>
        <dbReference type="UniProtKB" id="P9WKD3"/>
    </source>
</evidence>
<evidence type="ECO:0000255" key="3"/>
<evidence type="ECO:0000255" key="4">
    <source>
        <dbReference type="PROSITE-ProRule" id="PRU10101"/>
    </source>
</evidence>
<evidence type="ECO:0000256" key="5">
    <source>
        <dbReference type="SAM" id="MobiDB-lite"/>
    </source>
</evidence>
<evidence type="ECO:0000305" key="6"/>
<evidence type="ECO:0000305" key="7">
    <source>
    </source>
</evidence>
<dbReference type="EC" id="3.5.2.6"/>
<dbReference type="EMBL" id="Z13971">
    <property type="protein sequence ID" value="CAA78373.1"/>
    <property type="molecule type" value="Genomic_DNA"/>
</dbReference>
<dbReference type="PIR" id="S36188">
    <property type="entry name" value="S36188"/>
</dbReference>
<dbReference type="SMR" id="Q06316"/>
<dbReference type="GO" id="GO:0005576">
    <property type="term" value="C:extracellular region"/>
    <property type="evidence" value="ECO:0007669"/>
    <property type="project" value="UniProtKB-SubCell"/>
</dbReference>
<dbReference type="GO" id="GO:0008800">
    <property type="term" value="F:beta-lactamase activity"/>
    <property type="evidence" value="ECO:0007669"/>
    <property type="project" value="UniProtKB-EC"/>
</dbReference>
<dbReference type="GO" id="GO:0030655">
    <property type="term" value="P:beta-lactam antibiotic catabolic process"/>
    <property type="evidence" value="ECO:0007669"/>
    <property type="project" value="InterPro"/>
</dbReference>
<dbReference type="GO" id="GO:0046677">
    <property type="term" value="P:response to antibiotic"/>
    <property type="evidence" value="ECO:0007669"/>
    <property type="project" value="UniProtKB-KW"/>
</dbReference>
<dbReference type="Gene3D" id="3.40.710.10">
    <property type="entry name" value="DD-peptidase/beta-lactamase superfamily"/>
    <property type="match status" value="1"/>
</dbReference>
<dbReference type="InterPro" id="IPR012338">
    <property type="entry name" value="Beta-lactam/transpept-like"/>
</dbReference>
<dbReference type="InterPro" id="IPR045155">
    <property type="entry name" value="Beta-lactam_cat"/>
</dbReference>
<dbReference type="InterPro" id="IPR000871">
    <property type="entry name" value="Beta-lactam_class-A"/>
</dbReference>
<dbReference type="InterPro" id="IPR023650">
    <property type="entry name" value="Beta-lactam_class-A_AS"/>
</dbReference>
<dbReference type="NCBIfam" id="NF033103">
    <property type="entry name" value="bla_class_A"/>
    <property type="match status" value="1"/>
</dbReference>
<dbReference type="PANTHER" id="PTHR35333">
    <property type="entry name" value="BETA-LACTAMASE"/>
    <property type="match status" value="1"/>
</dbReference>
<dbReference type="PANTHER" id="PTHR35333:SF3">
    <property type="entry name" value="BETA-LACTAMASE-TYPE TRANSPEPTIDASE FOLD CONTAINING PROTEIN"/>
    <property type="match status" value="1"/>
</dbReference>
<dbReference type="Pfam" id="PF13354">
    <property type="entry name" value="Beta-lactamase2"/>
    <property type="match status" value="1"/>
</dbReference>
<dbReference type="PRINTS" id="PR00118">
    <property type="entry name" value="BLACTAMASEA"/>
</dbReference>
<dbReference type="SUPFAM" id="SSF56601">
    <property type="entry name" value="beta-lactamase/transpeptidase-like"/>
    <property type="match status" value="1"/>
</dbReference>
<dbReference type="PROSITE" id="PS00146">
    <property type="entry name" value="BETA_LACTAMASE_A"/>
    <property type="match status" value="1"/>
</dbReference>
<name>BLAC_AMYLA</name>
<gene>
    <name type="primary">bla</name>
</gene>